<sequence>MVNVDEFIEEAKAEIAEEIGDKHAVIGLSGGVDSSTAAALAYEAIGDQLTAVYVDTGLMRKGETDEIRETFDYMDSLRIVEAQDRFLDELEGETDPEEKRHIIGEQFIREFETVAREVDADYLVQGTIYPDRIESEGTIKSHHNVGGLPERIDFDGIVEPMRDLYKDEVREVARALDLEEIISERMPFPGPGLAVRIIGEVTEEKLAVAREANHVVEEELEEYEPWQALAAVIGKATGVKGDNRVHGWVVAVRSVESRDGMTARAQELDWDTLQRMQSRITGAHENVARVVYDVTHKPPATIEYE</sequence>
<protein>
    <recommendedName>
        <fullName evidence="1">GMP synthase [glutamine-hydrolyzing] subunit B</fullName>
        <ecNumber evidence="1">6.3.5.2</ecNumber>
    </recommendedName>
    <alternativeName>
        <fullName evidence="1">GMP synthetase</fullName>
    </alternativeName>
</protein>
<evidence type="ECO:0000255" key="1">
    <source>
        <dbReference type="HAMAP-Rule" id="MF_00345"/>
    </source>
</evidence>
<dbReference type="EC" id="6.3.5.2" evidence="1"/>
<dbReference type="EMBL" id="AY596297">
    <property type="protein sequence ID" value="AAV48147.1"/>
    <property type="molecule type" value="Genomic_DNA"/>
</dbReference>
<dbReference type="SMR" id="Q5UX56"/>
<dbReference type="STRING" id="272569.rrnAC3472"/>
<dbReference type="PaxDb" id="272569-rrnAC3472"/>
<dbReference type="EnsemblBacteria" id="AAV48147">
    <property type="protein sequence ID" value="AAV48147"/>
    <property type="gene ID" value="rrnAC3472"/>
</dbReference>
<dbReference type="KEGG" id="hma:rrnAC3472"/>
<dbReference type="PATRIC" id="fig|272569.17.peg.3984"/>
<dbReference type="eggNOG" id="arCOG00085">
    <property type="taxonomic scope" value="Archaea"/>
</dbReference>
<dbReference type="HOGENOM" id="CLU_014340_0_0_2"/>
<dbReference type="UniPathway" id="UPA00189">
    <property type="reaction ID" value="UER00296"/>
</dbReference>
<dbReference type="Proteomes" id="UP000001169">
    <property type="component" value="Chromosome I"/>
</dbReference>
<dbReference type="GO" id="GO:0005829">
    <property type="term" value="C:cytosol"/>
    <property type="evidence" value="ECO:0007669"/>
    <property type="project" value="TreeGrafter"/>
</dbReference>
<dbReference type="GO" id="GO:0005524">
    <property type="term" value="F:ATP binding"/>
    <property type="evidence" value="ECO:0007669"/>
    <property type="project" value="UniProtKB-UniRule"/>
</dbReference>
<dbReference type="GO" id="GO:0003921">
    <property type="term" value="F:GMP synthase activity"/>
    <property type="evidence" value="ECO:0007669"/>
    <property type="project" value="InterPro"/>
</dbReference>
<dbReference type="CDD" id="cd01997">
    <property type="entry name" value="GMP_synthase_C"/>
    <property type="match status" value="1"/>
</dbReference>
<dbReference type="FunFam" id="3.40.50.620:FF:000208">
    <property type="entry name" value="GMP synthase [glutamine-hydrolyzing] subunit B"/>
    <property type="match status" value="1"/>
</dbReference>
<dbReference type="Gene3D" id="3.30.300.10">
    <property type="match status" value="1"/>
</dbReference>
<dbReference type="Gene3D" id="3.40.50.620">
    <property type="entry name" value="HUPs"/>
    <property type="match status" value="1"/>
</dbReference>
<dbReference type="HAMAP" id="MF_00345">
    <property type="entry name" value="GMP_synthase_B"/>
    <property type="match status" value="1"/>
</dbReference>
<dbReference type="InterPro" id="IPR001674">
    <property type="entry name" value="GMP_synth_C"/>
</dbReference>
<dbReference type="InterPro" id="IPR026598">
    <property type="entry name" value="GMP_synthase_B"/>
</dbReference>
<dbReference type="InterPro" id="IPR025777">
    <property type="entry name" value="GMPS_ATP_PPase_dom"/>
</dbReference>
<dbReference type="InterPro" id="IPR022310">
    <property type="entry name" value="NAD/GMP_synthase"/>
</dbReference>
<dbReference type="InterPro" id="IPR014729">
    <property type="entry name" value="Rossmann-like_a/b/a_fold"/>
</dbReference>
<dbReference type="NCBIfam" id="TIGR00884">
    <property type="entry name" value="guaA_Cterm"/>
    <property type="match status" value="1"/>
</dbReference>
<dbReference type="PANTHER" id="PTHR11922:SF2">
    <property type="entry name" value="GMP SYNTHASE [GLUTAMINE-HYDROLYZING]"/>
    <property type="match status" value="1"/>
</dbReference>
<dbReference type="PANTHER" id="PTHR11922">
    <property type="entry name" value="GMP SYNTHASE-RELATED"/>
    <property type="match status" value="1"/>
</dbReference>
<dbReference type="Pfam" id="PF00958">
    <property type="entry name" value="GMP_synt_C"/>
    <property type="match status" value="1"/>
</dbReference>
<dbReference type="Pfam" id="PF02540">
    <property type="entry name" value="NAD_synthase"/>
    <property type="match status" value="1"/>
</dbReference>
<dbReference type="SUPFAM" id="SSF52402">
    <property type="entry name" value="Adenine nucleotide alpha hydrolases-like"/>
    <property type="match status" value="1"/>
</dbReference>
<dbReference type="SUPFAM" id="SSF54810">
    <property type="entry name" value="GMP synthetase C-terminal dimerisation domain"/>
    <property type="match status" value="1"/>
</dbReference>
<dbReference type="PROSITE" id="PS51553">
    <property type="entry name" value="GMPS_ATP_PPASE"/>
    <property type="match status" value="1"/>
</dbReference>
<accession>Q5UX56</accession>
<comment type="function">
    <text evidence="1">Catalyzes the synthesis of GMP from XMP.</text>
</comment>
<comment type="catalytic activity">
    <reaction evidence="1">
        <text>XMP + L-glutamine + ATP + H2O = GMP + L-glutamate + AMP + diphosphate + 2 H(+)</text>
        <dbReference type="Rhea" id="RHEA:11680"/>
        <dbReference type="ChEBI" id="CHEBI:15377"/>
        <dbReference type="ChEBI" id="CHEBI:15378"/>
        <dbReference type="ChEBI" id="CHEBI:29985"/>
        <dbReference type="ChEBI" id="CHEBI:30616"/>
        <dbReference type="ChEBI" id="CHEBI:33019"/>
        <dbReference type="ChEBI" id="CHEBI:57464"/>
        <dbReference type="ChEBI" id="CHEBI:58115"/>
        <dbReference type="ChEBI" id="CHEBI:58359"/>
        <dbReference type="ChEBI" id="CHEBI:456215"/>
        <dbReference type="EC" id="6.3.5.2"/>
    </reaction>
</comment>
<comment type="pathway">
    <text evidence="1">Purine metabolism; GMP biosynthesis; GMP from XMP (L-Gln route): step 1/1.</text>
</comment>
<comment type="subunit">
    <text evidence="1">Heterodimer composed of a glutamine amidotransferase subunit (A) and a GMP-binding subunit (B).</text>
</comment>
<organism>
    <name type="scientific">Haloarcula marismortui (strain ATCC 43049 / DSM 3752 / JCM 8966 / VKM B-1809)</name>
    <name type="common">Halobacterium marismortui</name>
    <dbReference type="NCBI Taxonomy" id="272569"/>
    <lineage>
        <taxon>Archaea</taxon>
        <taxon>Methanobacteriati</taxon>
        <taxon>Methanobacteriota</taxon>
        <taxon>Stenosarchaea group</taxon>
        <taxon>Halobacteria</taxon>
        <taxon>Halobacteriales</taxon>
        <taxon>Haloarculaceae</taxon>
        <taxon>Haloarcula</taxon>
    </lineage>
</organism>
<name>GUAAB_HALMA</name>
<keyword id="KW-0067">ATP-binding</keyword>
<keyword id="KW-0332">GMP biosynthesis</keyword>
<keyword id="KW-0436">Ligase</keyword>
<keyword id="KW-0547">Nucleotide-binding</keyword>
<keyword id="KW-0658">Purine biosynthesis</keyword>
<keyword id="KW-1185">Reference proteome</keyword>
<gene>
    <name evidence="1" type="primary">guaAB</name>
    <name type="synonym">guaA1</name>
    <name type="ordered locus">rrnAC3472</name>
</gene>
<feature type="chain" id="PRO_0000140238" description="GMP synthase [glutamine-hydrolyzing] subunit B">
    <location>
        <begin position="1"/>
        <end position="305"/>
    </location>
</feature>
<feature type="domain" description="GMPS ATP-PPase" evidence="1">
    <location>
        <begin position="2"/>
        <end position="185"/>
    </location>
</feature>
<feature type="binding site" evidence="1">
    <location>
        <begin position="29"/>
        <end position="35"/>
    </location>
    <ligand>
        <name>ATP</name>
        <dbReference type="ChEBI" id="CHEBI:30616"/>
    </ligand>
</feature>
<proteinExistence type="inferred from homology"/>
<reference key="1">
    <citation type="journal article" date="2004" name="Genome Res.">
        <title>Genome sequence of Haloarcula marismortui: a halophilic archaeon from the Dead Sea.</title>
        <authorList>
            <person name="Baliga N.S."/>
            <person name="Bonneau R."/>
            <person name="Facciotti M.T."/>
            <person name="Pan M."/>
            <person name="Glusman G."/>
            <person name="Deutsch E.W."/>
            <person name="Shannon P."/>
            <person name="Chiu Y."/>
            <person name="Weng R.S."/>
            <person name="Gan R.R."/>
            <person name="Hung P."/>
            <person name="Date S.V."/>
            <person name="Marcotte E."/>
            <person name="Hood L."/>
            <person name="Ng W.V."/>
        </authorList>
    </citation>
    <scope>NUCLEOTIDE SEQUENCE [LARGE SCALE GENOMIC DNA]</scope>
    <source>
        <strain>ATCC 43049 / DSM 3752 / JCM 8966 / VKM B-1809</strain>
    </source>
</reference>